<comment type="function">
    <text evidence="1">Produces ATP from ADP in the presence of a proton gradient across the membrane. The gamma chain is believed to be important in regulating ATPase activity and the flow of protons through the CF(0) complex.</text>
</comment>
<comment type="subunit">
    <text evidence="1">F-type ATPases have 2 components, CF(1) - the catalytic core - and CF(0) - the membrane proton channel. CF(1) has five subunits: alpha(3), beta(3), gamma(1), delta(1), epsilon(1). CF(0) has three main subunits: a, b and c.</text>
</comment>
<comment type="subcellular location">
    <subcellularLocation>
        <location evidence="1">Cell membrane</location>
        <topology evidence="1">Peripheral membrane protein</topology>
    </subcellularLocation>
</comment>
<comment type="similarity">
    <text evidence="1">Belongs to the ATPase gamma chain family.</text>
</comment>
<proteinExistence type="inferred from homology"/>
<keyword id="KW-0066">ATP synthesis</keyword>
<keyword id="KW-1003">Cell membrane</keyword>
<keyword id="KW-0139">CF(1)</keyword>
<keyword id="KW-0375">Hydrogen ion transport</keyword>
<keyword id="KW-0406">Ion transport</keyword>
<keyword id="KW-0472">Membrane</keyword>
<keyword id="KW-1185">Reference proteome</keyword>
<keyword id="KW-0813">Transport</keyword>
<sequence length="283" mass="31041">MASARDLRRRIKSVKSTQQITKAMKMVAAAKLRRAQEAVEAARPFALKIKDVLSRVAAASGGASHPLLEEREVKTIAYVIITADRGLCGGFNANILRRAASEVRDVNNPAIVAVGTKSRDYFTRRGYDITASYVRLGEAIQFSQAKEIARFVIDKYVAGEFDEVHLVFSEFVNILTQRPVKVKLLPVETPTEEKKGPQVEYIFEPSAEAVLAELLPTYVETTVFRAMLEAKAGEQGARMTAMDSATKNAKELINKLTLSLNRARQAAITKEISEIVGGAAALE</sequence>
<feature type="chain" id="PRO_1000072860" description="ATP synthase gamma chain">
    <location>
        <begin position="1"/>
        <end position="283"/>
    </location>
</feature>
<gene>
    <name evidence="1" type="primary">atpG</name>
    <name type="ordered locus">Dred_3151</name>
</gene>
<dbReference type="EMBL" id="CP000612">
    <property type="protein sequence ID" value="ABO51653.1"/>
    <property type="molecule type" value="Genomic_DNA"/>
</dbReference>
<dbReference type="RefSeq" id="WP_011879441.1">
    <property type="nucleotide sequence ID" value="NC_009253.1"/>
</dbReference>
<dbReference type="SMR" id="A4J9A0"/>
<dbReference type="STRING" id="349161.Dred_3151"/>
<dbReference type="KEGG" id="drm:Dred_3151"/>
<dbReference type="eggNOG" id="COG0224">
    <property type="taxonomic scope" value="Bacteria"/>
</dbReference>
<dbReference type="HOGENOM" id="CLU_050669_0_1_9"/>
<dbReference type="OrthoDB" id="9812769at2"/>
<dbReference type="Proteomes" id="UP000001556">
    <property type="component" value="Chromosome"/>
</dbReference>
<dbReference type="GO" id="GO:0005886">
    <property type="term" value="C:plasma membrane"/>
    <property type="evidence" value="ECO:0007669"/>
    <property type="project" value="UniProtKB-SubCell"/>
</dbReference>
<dbReference type="GO" id="GO:0045259">
    <property type="term" value="C:proton-transporting ATP synthase complex"/>
    <property type="evidence" value="ECO:0007669"/>
    <property type="project" value="UniProtKB-KW"/>
</dbReference>
<dbReference type="GO" id="GO:0005524">
    <property type="term" value="F:ATP binding"/>
    <property type="evidence" value="ECO:0007669"/>
    <property type="project" value="UniProtKB-UniRule"/>
</dbReference>
<dbReference type="GO" id="GO:0046933">
    <property type="term" value="F:proton-transporting ATP synthase activity, rotational mechanism"/>
    <property type="evidence" value="ECO:0007669"/>
    <property type="project" value="UniProtKB-UniRule"/>
</dbReference>
<dbReference type="GO" id="GO:0042777">
    <property type="term" value="P:proton motive force-driven plasma membrane ATP synthesis"/>
    <property type="evidence" value="ECO:0007669"/>
    <property type="project" value="UniProtKB-UniRule"/>
</dbReference>
<dbReference type="CDD" id="cd12151">
    <property type="entry name" value="F1-ATPase_gamma"/>
    <property type="match status" value="1"/>
</dbReference>
<dbReference type="FunFam" id="1.10.287.80:FF:000003">
    <property type="entry name" value="ATP synthase gamma chain, chloroplastic"/>
    <property type="match status" value="1"/>
</dbReference>
<dbReference type="Gene3D" id="3.40.1380.10">
    <property type="match status" value="1"/>
</dbReference>
<dbReference type="Gene3D" id="1.10.287.80">
    <property type="entry name" value="ATP synthase, gamma subunit, helix hairpin domain"/>
    <property type="match status" value="1"/>
</dbReference>
<dbReference type="HAMAP" id="MF_00815">
    <property type="entry name" value="ATP_synth_gamma_bact"/>
    <property type="match status" value="1"/>
</dbReference>
<dbReference type="InterPro" id="IPR035968">
    <property type="entry name" value="ATP_synth_F1_ATPase_gsu"/>
</dbReference>
<dbReference type="InterPro" id="IPR000131">
    <property type="entry name" value="ATP_synth_F1_gsu"/>
</dbReference>
<dbReference type="InterPro" id="IPR023632">
    <property type="entry name" value="ATP_synth_F1_gsu_CS"/>
</dbReference>
<dbReference type="NCBIfam" id="TIGR01146">
    <property type="entry name" value="ATPsyn_F1gamma"/>
    <property type="match status" value="1"/>
</dbReference>
<dbReference type="PANTHER" id="PTHR11693">
    <property type="entry name" value="ATP SYNTHASE GAMMA CHAIN"/>
    <property type="match status" value="1"/>
</dbReference>
<dbReference type="PANTHER" id="PTHR11693:SF22">
    <property type="entry name" value="ATP SYNTHASE SUBUNIT GAMMA, MITOCHONDRIAL"/>
    <property type="match status" value="1"/>
</dbReference>
<dbReference type="Pfam" id="PF00231">
    <property type="entry name" value="ATP-synt"/>
    <property type="match status" value="1"/>
</dbReference>
<dbReference type="PRINTS" id="PR00126">
    <property type="entry name" value="ATPASEGAMMA"/>
</dbReference>
<dbReference type="SUPFAM" id="SSF52943">
    <property type="entry name" value="ATP synthase (F1-ATPase), gamma subunit"/>
    <property type="match status" value="1"/>
</dbReference>
<dbReference type="PROSITE" id="PS00153">
    <property type="entry name" value="ATPASE_GAMMA"/>
    <property type="match status" value="1"/>
</dbReference>
<organism>
    <name type="scientific">Desulforamulus reducens (strain ATCC BAA-1160 / DSM 100696 / MI-1)</name>
    <name type="common">Desulfotomaculum reducens</name>
    <dbReference type="NCBI Taxonomy" id="349161"/>
    <lineage>
        <taxon>Bacteria</taxon>
        <taxon>Bacillati</taxon>
        <taxon>Bacillota</taxon>
        <taxon>Clostridia</taxon>
        <taxon>Eubacteriales</taxon>
        <taxon>Peptococcaceae</taxon>
        <taxon>Desulforamulus</taxon>
    </lineage>
</organism>
<evidence type="ECO:0000255" key="1">
    <source>
        <dbReference type="HAMAP-Rule" id="MF_00815"/>
    </source>
</evidence>
<protein>
    <recommendedName>
        <fullName evidence="1">ATP synthase gamma chain</fullName>
    </recommendedName>
    <alternativeName>
        <fullName evidence="1">ATP synthase F1 sector gamma subunit</fullName>
    </alternativeName>
    <alternativeName>
        <fullName evidence="1">F-ATPase gamma subunit</fullName>
    </alternativeName>
</protein>
<reference key="1">
    <citation type="submission" date="2007-03" db="EMBL/GenBank/DDBJ databases">
        <title>Complete sequence of Desulfotomaculum reducens MI-1.</title>
        <authorList>
            <consortium name="US DOE Joint Genome Institute"/>
            <person name="Copeland A."/>
            <person name="Lucas S."/>
            <person name="Lapidus A."/>
            <person name="Barry K."/>
            <person name="Detter J.C."/>
            <person name="Glavina del Rio T."/>
            <person name="Hammon N."/>
            <person name="Israni S."/>
            <person name="Dalin E."/>
            <person name="Tice H."/>
            <person name="Pitluck S."/>
            <person name="Sims D."/>
            <person name="Brettin T."/>
            <person name="Bruce D."/>
            <person name="Han C."/>
            <person name="Tapia R."/>
            <person name="Schmutz J."/>
            <person name="Larimer F."/>
            <person name="Land M."/>
            <person name="Hauser L."/>
            <person name="Kyrpides N."/>
            <person name="Kim E."/>
            <person name="Tebo B.M."/>
            <person name="Richardson P."/>
        </authorList>
    </citation>
    <scope>NUCLEOTIDE SEQUENCE [LARGE SCALE GENOMIC DNA]</scope>
    <source>
        <strain>ATCC BAA-1160 / DSM 100696 / MI-1</strain>
    </source>
</reference>
<name>ATPG_DESRM</name>
<accession>A4J9A0</accession>